<gene>
    <name type="primary">KXD1</name>
    <name type="ORF">VIN13_1702</name>
</gene>
<evidence type="ECO:0000250" key="1"/>
<evidence type="ECO:0000255" key="2"/>
<evidence type="ECO:0000256" key="3">
    <source>
        <dbReference type="SAM" id="MobiDB-lite"/>
    </source>
</evidence>
<evidence type="ECO:0000305" key="4"/>
<feature type="chain" id="PRO_0000410678" description="Biogenesis of lysosome-related organelles complex 1 subunit KXD1">
    <location>
        <begin position="1"/>
        <end position="218"/>
    </location>
</feature>
<feature type="region of interest" description="Disordered" evidence="3">
    <location>
        <begin position="1"/>
        <end position="65"/>
    </location>
</feature>
<feature type="coiled-coil region" evidence="2">
    <location>
        <begin position="142"/>
        <end position="192"/>
    </location>
</feature>
<feature type="compositionally biased region" description="Polar residues" evidence="3">
    <location>
        <begin position="17"/>
        <end position="30"/>
    </location>
</feature>
<feature type="compositionally biased region" description="Low complexity" evidence="3">
    <location>
        <begin position="39"/>
        <end position="65"/>
    </location>
</feature>
<reference key="1">
    <citation type="journal article" date="2011" name="PLoS Genet.">
        <title>Whole-genome comparison reveals novel genetic elements that characterize the genome of industrial strains of Saccharomyces cerevisiae.</title>
        <authorList>
            <person name="Borneman A.R."/>
            <person name="Desany B.A."/>
            <person name="Riches D."/>
            <person name="Affourtit J.P."/>
            <person name="Forgan A.H."/>
            <person name="Pretorius I.S."/>
            <person name="Egholm M."/>
            <person name="Chambers P.J."/>
        </authorList>
    </citation>
    <scope>NUCLEOTIDE SEQUENCE [LARGE SCALE GENOMIC DNA]</scope>
    <source>
        <strain>VIN 13</strain>
    </source>
</reference>
<name>KXD1_YEASV</name>
<sequence length="218" mass="24442">MVTGISEENDDEETFSAVHSSTPSINSQSYAIPITEEMSSSFHDSISTTSNSSGSFDSDGSNVSDVVEQNEMDNESNVDEDLFLDNDIPQSSNLLPTDAQDPGPIFDVSRYIFDSLKQSIDSADFSEALSLQTKTSAVINSKSLELKQYIDEMKSRLTQLQEKFENGEATSKKIKRDLETSRKNIDYLNAALRVDFPIEFNQAREKILERRLNEDHDC</sequence>
<accession>E7LUC9</accession>
<protein>
    <recommendedName>
        <fullName>Biogenesis of lysosome-related organelles complex 1 subunit KXD1</fullName>
        <shortName>BLOC-1 subunit KXD1</shortName>
    </recommendedName>
    <alternativeName>
        <fullName>KxDL homolog</fullName>
    </alternativeName>
</protein>
<organism>
    <name type="scientific">Saccharomyces cerevisiae (strain VIN 13)</name>
    <name type="common">Baker's yeast</name>
    <dbReference type="NCBI Taxonomy" id="764099"/>
    <lineage>
        <taxon>Eukaryota</taxon>
        <taxon>Fungi</taxon>
        <taxon>Dikarya</taxon>
        <taxon>Ascomycota</taxon>
        <taxon>Saccharomycotina</taxon>
        <taxon>Saccharomycetes</taxon>
        <taxon>Saccharomycetales</taxon>
        <taxon>Saccharomycetaceae</taxon>
        <taxon>Saccharomyces</taxon>
    </lineage>
</organism>
<dbReference type="EMBL" id="ADXC01000034">
    <property type="protein sequence ID" value="EGA78846.1"/>
    <property type="molecule type" value="Genomic_DNA"/>
</dbReference>
<dbReference type="SMR" id="E7LUC9"/>
<dbReference type="HOGENOM" id="CLU_099155_0_0_1"/>
<dbReference type="OMA" id="TPMFDTS"/>
<dbReference type="GO" id="GO:0031083">
    <property type="term" value="C:BLOC-1 complex"/>
    <property type="evidence" value="ECO:0007669"/>
    <property type="project" value="TreeGrafter"/>
</dbReference>
<dbReference type="GO" id="GO:0005768">
    <property type="term" value="C:endosome"/>
    <property type="evidence" value="ECO:0007669"/>
    <property type="project" value="UniProtKB-SubCell"/>
</dbReference>
<dbReference type="GO" id="GO:0007032">
    <property type="term" value="P:endosome organization"/>
    <property type="evidence" value="ECO:0007669"/>
    <property type="project" value="TreeGrafter"/>
</dbReference>
<dbReference type="GO" id="GO:0032880">
    <property type="term" value="P:regulation of protein localization"/>
    <property type="evidence" value="ECO:0007669"/>
    <property type="project" value="TreeGrafter"/>
</dbReference>
<dbReference type="InterPro" id="IPR051390">
    <property type="entry name" value="BLOC-1_subunit_KXD1"/>
</dbReference>
<dbReference type="InterPro" id="IPR019371">
    <property type="entry name" value="KxDL_dom"/>
</dbReference>
<dbReference type="PANTHER" id="PTHR37787">
    <property type="entry name" value="BIOGENESIS OF LYSOSOME-RELATED ORGANELLES COMPLEX 1 SUBUNIT KXD1"/>
    <property type="match status" value="1"/>
</dbReference>
<dbReference type="PANTHER" id="PTHR37787:SF1">
    <property type="entry name" value="BIOGENESIS OF LYSOSOME-RELATED ORGANELLES COMPLEX 1 SUBUNIT KXD1"/>
    <property type="match status" value="1"/>
</dbReference>
<dbReference type="Pfam" id="PF10241">
    <property type="entry name" value="KxDL"/>
    <property type="match status" value="1"/>
</dbReference>
<proteinExistence type="inferred from homology"/>
<comment type="function">
    <text evidence="1">Component of the biogenesis of lysosome-related organelles complex-1 (BLOC-1) involved in endosomal cargo sorting.</text>
</comment>
<comment type="subunit">
    <text evidence="1">Component of the biogenesis of lysosome-related organelles complex-1 (BLOC-1) composed of at least BLI1, BLS1, CNL1, KXD1, SNN1 and VAB2.</text>
</comment>
<comment type="subcellular location">
    <subcellularLocation>
        <location evidence="1">Endosome</location>
    </subcellularLocation>
</comment>
<comment type="similarity">
    <text evidence="4">Belongs to the KXD1 family.</text>
</comment>
<keyword id="KW-0175">Coiled coil</keyword>
<keyword id="KW-0967">Endosome</keyword>
<keyword id="KW-0813">Transport</keyword>